<dbReference type="EC" id="2.3.1.275" evidence="1"/>
<dbReference type="EMBL" id="CP000958">
    <property type="protein sequence ID" value="ACA91741.1"/>
    <property type="molecule type" value="Genomic_DNA"/>
</dbReference>
<dbReference type="RefSeq" id="WP_012329096.1">
    <property type="nucleotide sequence ID" value="NC_010508.1"/>
</dbReference>
<dbReference type="SMR" id="B1JXG6"/>
<dbReference type="GeneID" id="83049368"/>
<dbReference type="KEGG" id="bcm:Bcenmc03_2580"/>
<dbReference type="HOGENOM" id="CLU_081254_0_0_4"/>
<dbReference type="UniPathway" id="UPA00085"/>
<dbReference type="Proteomes" id="UP000002169">
    <property type="component" value="Chromosome 1"/>
</dbReference>
<dbReference type="GO" id="GO:0005886">
    <property type="term" value="C:plasma membrane"/>
    <property type="evidence" value="ECO:0007669"/>
    <property type="project" value="UniProtKB-SubCell"/>
</dbReference>
<dbReference type="GO" id="GO:0043772">
    <property type="term" value="F:acyl-phosphate glycerol-3-phosphate acyltransferase activity"/>
    <property type="evidence" value="ECO:0007669"/>
    <property type="project" value="UniProtKB-UniRule"/>
</dbReference>
<dbReference type="GO" id="GO:0008654">
    <property type="term" value="P:phospholipid biosynthetic process"/>
    <property type="evidence" value="ECO:0007669"/>
    <property type="project" value="UniProtKB-UniRule"/>
</dbReference>
<dbReference type="HAMAP" id="MF_01043">
    <property type="entry name" value="PlsY"/>
    <property type="match status" value="1"/>
</dbReference>
<dbReference type="InterPro" id="IPR003811">
    <property type="entry name" value="G3P_acylTferase_PlsY"/>
</dbReference>
<dbReference type="NCBIfam" id="TIGR00023">
    <property type="entry name" value="glycerol-3-phosphate 1-O-acyltransferase PlsY"/>
    <property type="match status" value="1"/>
</dbReference>
<dbReference type="PANTHER" id="PTHR30309:SF0">
    <property type="entry name" value="GLYCEROL-3-PHOSPHATE ACYLTRANSFERASE-RELATED"/>
    <property type="match status" value="1"/>
</dbReference>
<dbReference type="PANTHER" id="PTHR30309">
    <property type="entry name" value="INNER MEMBRANE PROTEIN YGIH"/>
    <property type="match status" value="1"/>
</dbReference>
<dbReference type="Pfam" id="PF02660">
    <property type="entry name" value="G3P_acyltransf"/>
    <property type="match status" value="1"/>
</dbReference>
<dbReference type="SMART" id="SM01207">
    <property type="entry name" value="G3P_acyltransf"/>
    <property type="match status" value="1"/>
</dbReference>
<keyword id="KW-0997">Cell inner membrane</keyword>
<keyword id="KW-1003">Cell membrane</keyword>
<keyword id="KW-0444">Lipid biosynthesis</keyword>
<keyword id="KW-0443">Lipid metabolism</keyword>
<keyword id="KW-0472">Membrane</keyword>
<keyword id="KW-0594">Phospholipid biosynthesis</keyword>
<keyword id="KW-1208">Phospholipid metabolism</keyword>
<keyword id="KW-0808">Transferase</keyword>
<keyword id="KW-0812">Transmembrane</keyword>
<keyword id="KW-1133">Transmembrane helix</keyword>
<gene>
    <name evidence="1" type="primary">plsY</name>
    <name type="ordered locus">Bcenmc03_2580</name>
</gene>
<proteinExistence type="inferred from homology"/>
<evidence type="ECO:0000255" key="1">
    <source>
        <dbReference type="HAMAP-Rule" id="MF_01043"/>
    </source>
</evidence>
<accession>B1JXG6</accession>
<feature type="chain" id="PRO_1000136068" description="Glycerol-3-phosphate acyltransferase">
    <location>
        <begin position="1"/>
        <end position="208"/>
    </location>
</feature>
<feature type="transmembrane region" description="Helical" evidence="1">
    <location>
        <begin position="3"/>
        <end position="23"/>
    </location>
</feature>
<feature type="transmembrane region" description="Helical" evidence="1">
    <location>
        <begin position="51"/>
        <end position="71"/>
    </location>
</feature>
<feature type="transmembrane region" description="Helical" evidence="1">
    <location>
        <begin position="78"/>
        <end position="98"/>
    </location>
</feature>
<feature type="transmembrane region" description="Helical" evidence="1">
    <location>
        <begin position="115"/>
        <end position="135"/>
    </location>
</feature>
<feature type="transmembrane region" description="Helical" evidence="1">
    <location>
        <begin position="140"/>
        <end position="160"/>
    </location>
</feature>
<sequence length="208" mass="21916">MQILLAALVAYLIGSVSFAVVVSSVMGLADPRSYGSKNPGATNVLRSGNKKAAILTLVGDAFKGWIAVWLARHFGLPDVAIAWVAIAVFLGHLYPVFFRFQGGKGVATAAGVLLAVHPVLGLATALTWLIVAFFFRYSSLAALVAAVFAPVFDVFLFGMPGHNPVAWAVLAMSVLLVWRHRGNISKLLAGQESRIGDKKKAAADGGKA</sequence>
<comment type="function">
    <text evidence="1">Catalyzes the transfer of an acyl group from acyl-phosphate (acyl-PO(4)) to glycerol-3-phosphate (G3P) to form lysophosphatidic acid (LPA). This enzyme utilizes acyl-phosphate as fatty acyl donor, but not acyl-CoA or acyl-ACP.</text>
</comment>
<comment type="catalytic activity">
    <reaction evidence="1">
        <text>an acyl phosphate + sn-glycerol 3-phosphate = a 1-acyl-sn-glycero-3-phosphate + phosphate</text>
        <dbReference type="Rhea" id="RHEA:34075"/>
        <dbReference type="ChEBI" id="CHEBI:43474"/>
        <dbReference type="ChEBI" id="CHEBI:57597"/>
        <dbReference type="ChEBI" id="CHEBI:57970"/>
        <dbReference type="ChEBI" id="CHEBI:59918"/>
        <dbReference type="EC" id="2.3.1.275"/>
    </reaction>
</comment>
<comment type="pathway">
    <text evidence="1">Lipid metabolism; phospholipid metabolism.</text>
</comment>
<comment type="subunit">
    <text evidence="1">Probably interacts with PlsX.</text>
</comment>
<comment type="subcellular location">
    <subcellularLocation>
        <location evidence="1">Cell inner membrane</location>
        <topology evidence="1">Multi-pass membrane protein</topology>
    </subcellularLocation>
</comment>
<comment type="similarity">
    <text evidence="1">Belongs to the PlsY family.</text>
</comment>
<name>PLSY_BURO0</name>
<reference key="1">
    <citation type="submission" date="2008-02" db="EMBL/GenBank/DDBJ databases">
        <title>Complete sequence of chromosome 1 of Burkholderia cenocepacia MC0-3.</title>
        <authorList>
            <person name="Copeland A."/>
            <person name="Lucas S."/>
            <person name="Lapidus A."/>
            <person name="Barry K."/>
            <person name="Bruce D."/>
            <person name="Goodwin L."/>
            <person name="Glavina del Rio T."/>
            <person name="Dalin E."/>
            <person name="Tice H."/>
            <person name="Pitluck S."/>
            <person name="Chain P."/>
            <person name="Malfatti S."/>
            <person name="Shin M."/>
            <person name="Vergez L."/>
            <person name="Schmutz J."/>
            <person name="Larimer F."/>
            <person name="Land M."/>
            <person name="Hauser L."/>
            <person name="Kyrpides N."/>
            <person name="Mikhailova N."/>
            <person name="Tiedje J."/>
            <person name="Richardson P."/>
        </authorList>
    </citation>
    <scope>NUCLEOTIDE SEQUENCE [LARGE SCALE GENOMIC DNA]</scope>
    <source>
        <strain>MC0-3</strain>
    </source>
</reference>
<organism>
    <name type="scientific">Burkholderia orbicola (strain MC0-3)</name>
    <dbReference type="NCBI Taxonomy" id="406425"/>
    <lineage>
        <taxon>Bacteria</taxon>
        <taxon>Pseudomonadati</taxon>
        <taxon>Pseudomonadota</taxon>
        <taxon>Betaproteobacteria</taxon>
        <taxon>Burkholderiales</taxon>
        <taxon>Burkholderiaceae</taxon>
        <taxon>Burkholderia</taxon>
        <taxon>Burkholderia cepacia complex</taxon>
        <taxon>Burkholderia orbicola</taxon>
    </lineage>
</organism>
<protein>
    <recommendedName>
        <fullName evidence="1">Glycerol-3-phosphate acyltransferase</fullName>
    </recommendedName>
    <alternativeName>
        <fullName evidence="1">Acyl-PO4 G3P acyltransferase</fullName>
    </alternativeName>
    <alternativeName>
        <fullName evidence="1">Acyl-phosphate--glycerol-3-phosphate acyltransferase</fullName>
    </alternativeName>
    <alternativeName>
        <fullName evidence="1">G3P acyltransferase</fullName>
        <shortName evidence="1">GPAT</shortName>
        <ecNumber evidence="1">2.3.1.275</ecNumber>
    </alternativeName>
    <alternativeName>
        <fullName evidence="1">Lysophosphatidic acid synthase</fullName>
        <shortName evidence="1">LPA synthase</shortName>
    </alternativeName>
</protein>